<keyword id="KW-1185">Reference proteome</keyword>
<keyword id="KW-0687">Ribonucleoprotein</keyword>
<keyword id="KW-0689">Ribosomal protein</keyword>
<feature type="chain" id="PRO_1000072110" description="Large ribosomal subunit protein bL12">
    <location>
        <begin position="1"/>
        <end position="122"/>
    </location>
</feature>
<name>RL7_ACTSZ</name>
<evidence type="ECO:0000255" key="1">
    <source>
        <dbReference type="HAMAP-Rule" id="MF_00368"/>
    </source>
</evidence>
<evidence type="ECO:0000305" key="2"/>
<proteinExistence type="inferred from homology"/>
<comment type="function">
    <text evidence="1">Forms part of the ribosomal stalk which helps the ribosome interact with GTP-bound translation factors. Is thus essential for accurate translation.</text>
</comment>
<comment type="subunit">
    <text evidence="1">Homodimer. Part of the ribosomal stalk of the 50S ribosomal subunit. Forms a multimeric L10(L12)X complex, where L10 forms an elongated spine to which 2 to 4 L12 dimers bind in a sequential fashion. Binds GTP-bound translation factors.</text>
</comment>
<comment type="similarity">
    <text evidence="1">Belongs to the bacterial ribosomal protein bL12 family.</text>
</comment>
<protein>
    <recommendedName>
        <fullName evidence="1">Large ribosomal subunit protein bL12</fullName>
    </recommendedName>
    <alternativeName>
        <fullName evidence="2">50S ribosomal protein L7/L12</fullName>
    </alternativeName>
</protein>
<gene>
    <name evidence="1" type="primary">rplL</name>
    <name type="ordered locus">Asuc_0042</name>
</gene>
<reference key="1">
    <citation type="journal article" date="2010" name="BMC Genomics">
        <title>A genomic perspective on the potential of Actinobacillus succinogenes for industrial succinate production.</title>
        <authorList>
            <person name="McKinlay J.B."/>
            <person name="Laivenieks M."/>
            <person name="Schindler B.D."/>
            <person name="McKinlay A.A."/>
            <person name="Siddaramappa S."/>
            <person name="Challacombe J.F."/>
            <person name="Lowry S.R."/>
            <person name="Clum A."/>
            <person name="Lapidus A.L."/>
            <person name="Burkhart K.B."/>
            <person name="Harkins V."/>
            <person name="Vieille C."/>
        </authorList>
    </citation>
    <scope>NUCLEOTIDE SEQUENCE [LARGE SCALE GENOMIC DNA]</scope>
    <source>
        <strain>ATCC 55618 / DSM 22257 / CCUG 43843 / 130Z</strain>
    </source>
</reference>
<organism>
    <name type="scientific">Actinobacillus succinogenes (strain ATCC 55618 / DSM 22257 / CCUG 43843 / 130Z)</name>
    <dbReference type="NCBI Taxonomy" id="339671"/>
    <lineage>
        <taxon>Bacteria</taxon>
        <taxon>Pseudomonadati</taxon>
        <taxon>Pseudomonadota</taxon>
        <taxon>Gammaproteobacteria</taxon>
        <taxon>Pasteurellales</taxon>
        <taxon>Pasteurellaceae</taxon>
        <taxon>Actinobacillus</taxon>
    </lineage>
</organism>
<accession>A6VKC6</accession>
<dbReference type="EMBL" id="CP000746">
    <property type="protein sequence ID" value="ABR73423.1"/>
    <property type="molecule type" value="Genomic_DNA"/>
</dbReference>
<dbReference type="RefSeq" id="WP_011978699.1">
    <property type="nucleotide sequence ID" value="NC_009655.1"/>
</dbReference>
<dbReference type="SMR" id="A6VKC6"/>
<dbReference type="STRING" id="339671.Asuc_0042"/>
<dbReference type="KEGG" id="asu:Asuc_0042"/>
<dbReference type="eggNOG" id="COG0222">
    <property type="taxonomic scope" value="Bacteria"/>
</dbReference>
<dbReference type="HOGENOM" id="CLU_086499_3_2_6"/>
<dbReference type="OrthoDB" id="9811748at2"/>
<dbReference type="Proteomes" id="UP000001114">
    <property type="component" value="Chromosome"/>
</dbReference>
<dbReference type="GO" id="GO:0022625">
    <property type="term" value="C:cytosolic large ribosomal subunit"/>
    <property type="evidence" value="ECO:0007669"/>
    <property type="project" value="TreeGrafter"/>
</dbReference>
<dbReference type="GO" id="GO:0003729">
    <property type="term" value="F:mRNA binding"/>
    <property type="evidence" value="ECO:0007669"/>
    <property type="project" value="TreeGrafter"/>
</dbReference>
<dbReference type="GO" id="GO:0003735">
    <property type="term" value="F:structural constituent of ribosome"/>
    <property type="evidence" value="ECO:0007669"/>
    <property type="project" value="InterPro"/>
</dbReference>
<dbReference type="GO" id="GO:0006412">
    <property type="term" value="P:translation"/>
    <property type="evidence" value="ECO:0007669"/>
    <property type="project" value="UniProtKB-UniRule"/>
</dbReference>
<dbReference type="CDD" id="cd00387">
    <property type="entry name" value="Ribosomal_L7_L12"/>
    <property type="match status" value="1"/>
</dbReference>
<dbReference type="FunFam" id="3.30.1390.10:FF:000001">
    <property type="entry name" value="50S ribosomal protein L7/L12"/>
    <property type="match status" value="1"/>
</dbReference>
<dbReference type="Gene3D" id="3.30.1390.10">
    <property type="match status" value="1"/>
</dbReference>
<dbReference type="Gene3D" id="1.20.5.710">
    <property type="entry name" value="Single helix bin"/>
    <property type="match status" value="1"/>
</dbReference>
<dbReference type="HAMAP" id="MF_00368">
    <property type="entry name" value="Ribosomal_bL12"/>
    <property type="match status" value="1"/>
</dbReference>
<dbReference type="InterPro" id="IPR000206">
    <property type="entry name" value="Ribosomal_bL12"/>
</dbReference>
<dbReference type="InterPro" id="IPR013823">
    <property type="entry name" value="Ribosomal_bL12_C"/>
</dbReference>
<dbReference type="InterPro" id="IPR014719">
    <property type="entry name" value="Ribosomal_bL12_C/ClpS-like"/>
</dbReference>
<dbReference type="InterPro" id="IPR008932">
    <property type="entry name" value="Ribosomal_bL12_oligo"/>
</dbReference>
<dbReference type="InterPro" id="IPR036235">
    <property type="entry name" value="Ribosomal_bL12_oligo_N_sf"/>
</dbReference>
<dbReference type="NCBIfam" id="TIGR00855">
    <property type="entry name" value="L12"/>
    <property type="match status" value="1"/>
</dbReference>
<dbReference type="PANTHER" id="PTHR45987">
    <property type="entry name" value="39S RIBOSOMAL PROTEIN L12"/>
    <property type="match status" value="1"/>
</dbReference>
<dbReference type="PANTHER" id="PTHR45987:SF4">
    <property type="entry name" value="LARGE RIBOSOMAL SUBUNIT PROTEIN BL12M"/>
    <property type="match status" value="1"/>
</dbReference>
<dbReference type="Pfam" id="PF00542">
    <property type="entry name" value="Ribosomal_L12"/>
    <property type="match status" value="1"/>
</dbReference>
<dbReference type="Pfam" id="PF16320">
    <property type="entry name" value="Ribosomal_L12_N"/>
    <property type="match status" value="1"/>
</dbReference>
<dbReference type="SUPFAM" id="SSF54736">
    <property type="entry name" value="ClpS-like"/>
    <property type="match status" value="1"/>
</dbReference>
<dbReference type="SUPFAM" id="SSF48300">
    <property type="entry name" value="Ribosomal protein L7/12, oligomerisation (N-terminal) domain"/>
    <property type="match status" value="1"/>
</dbReference>
<sequence>MSLTNEQLIEAIASKSVSEIVELIAAMEEKFGVSAAVAAAAPAAGGAAAAEEKTEFNVVLTEAGANKVAVIKAVRGATGLGLKEAKDLVESAPANLKEGISKGEAEELKKALEEAGAKVEIK</sequence>